<evidence type="ECO:0000250" key="1"/>
<evidence type="ECO:0000250" key="2">
    <source>
        <dbReference type="UniProtKB" id="O97944"/>
    </source>
</evidence>
<evidence type="ECO:0000250" key="3">
    <source>
        <dbReference type="UniProtKB" id="P02663"/>
    </source>
</evidence>
<evidence type="ECO:0000305" key="4"/>
<gene>
    <name type="primary">CSN1S2</name>
</gene>
<dbReference type="EMBL" id="X00374">
    <property type="protein sequence ID" value="CAA25110.1"/>
    <property type="molecule type" value="mRNA"/>
</dbReference>
<dbReference type="PIR" id="A27237">
    <property type="entry name" value="A27237"/>
</dbReference>
<dbReference type="RefSeq" id="NP_001166365.1">
    <property type="nucleotide sequence ID" value="NM_001172894.1"/>
</dbReference>
<dbReference type="SMR" id="P04655"/>
<dbReference type="FunCoup" id="P04655">
    <property type="interactions" value="16"/>
</dbReference>
<dbReference type="GeneID" id="100379582"/>
<dbReference type="KEGG" id="cpoc:100379582"/>
<dbReference type="CTD" id="282209"/>
<dbReference type="eggNOG" id="ENOG502TDWX">
    <property type="taxonomic scope" value="Eukaryota"/>
</dbReference>
<dbReference type="InParanoid" id="P04655"/>
<dbReference type="OrthoDB" id="9564348at2759"/>
<dbReference type="Proteomes" id="UP000005447">
    <property type="component" value="Unassembled WGS sequence"/>
</dbReference>
<dbReference type="GO" id="GO:0005615">
    <property type="term" value="C:extracellular space"/>
    <property type="evidence" value="ECO:0007669"/>
    <property type="project" value="TreeGrafter"/>
</dbReference>
<dbReference type="GO" id="GO:0042803">
    <property type="term" value="F:protein homodimerization activity"/>
    <property type="evidence" value="ECO:0007669"/>
    <property type="project" value="TreeGrafter"/>
</dbReference>
<dbReference type="GO" id="GO:0035375">
    <property type="term" value="F:zymogen binding"/>
    <property type="evidence" value="ECO:0007669"/>
    <property type="project" value="TreeGrafter"/>
</dbReference>
<dbReference type="InterPro" id="IPR011175">
    <property type="entry name" value="Alpha-s2_casein"/>
</dbReference>
<dbReference type="InterPro" id="IPR001588">
    <property type="entry name" value="Casein"/>
</dbReference>
<dbReference type="InterPro" id="IPR031305">
    <property type="entry name" value="Casein_CS"/>
</dbReference>
<dbReference type="PANTHER" id="PTHR16656">
    <property type="entry name" value="ALPHA-S2-CASEIN-LIKE B"/>
    <property type="match status" value="1"/>
</dbReference>
<dbReference type="PANTHER" id="PTHR16656:SF5">
    <property type="entry name" value="ALPHA-S2-CASEIN-LIKE B"/>
    <property type="match status" value="1"/>
</dbReference>
<dbReference type="Pfam" id="PF00363">
    <property type="entry name" value="Casein"/>
    <property type="match status" value="1"/>
</dbReference>
<dbReference type="PIRSF" id="PIRSF002371">
    <property type="entry name" value="Alpha-s2-casein"/>
    <property type="match status" value="1"/>
</dbReference>
<dbReference type="PROSITE" id="PS00306">
    <property type="entry name" value="CASEIN_ALPHA_BETA"/>
    <property type="match status" value="1"/>
</dbReference>
<protein>
    <recommendedName>
        <fullName>Alpha-S2-casein</fullName>
    </recommendedName>
    <alternativeName>
        <fullName>Casein-A</fullName>
    </alternativeName>
</protein>
<keyword id="KW-0494">Milk protein</keyword>
<keyword id="KW-0597">Phosphoprotein</keyword>
<keyword id="KW-1185">Reference proteome</keyword>
<keyword id="KW-0677">Repeat</keyword>
<keyword id="KW-0964">Secreted</keyword>
<keyword id="KW-0732">Signal</keyword>
<reference key="1">
    <citation type="journal article" date="1984" name="Eur. J. Biochem.">
        <title>Guinea-pig casein A cDNA. Nucleotide sequence analysis and comparison of the deduced protein sequence with that of bovine alpha s2 casein.</title>
        <authorList>
            <person name="Hall L."/>
            <person name="Laird J.E."/>
            <person name="Pascall J.C."/>
            <person name="Craig R.K."/>
        </authorList>
    </citation>
    <scope>NUCLEOTIDE SEQUENCE [MRNA]</scope>
</reference>
<name>CASA2_CAVPO</name>
<organism>
    <name type="scientific">Cavia porcellus</name>
    <name type="common">Guinea pig</name>
    <dbReference type="NCBI Taxonomy" id="10141"/>
    <lineage>
        <taxon>Eukaryota</taxon>
        <taxon>Metazoa</taxon>
        <taxon>Chordata</taxon>
        <taxon>Craniata</taxon>
        <taxon>Vertebrata</taxon>
        <taxon>Euteleostomi</taxon>
        <taxon>Mammalia</taxon>
        <taxon>Eutheria</taxon>
        <taxon>Euarchontoglires</taxon>
        <taxon>Glires</taxon>
        <taxon>Rodentia</taxon>
        <taxon>Hystricomorpha</taxon>
        <taxon>Caviidae</taxon>
        <taxon>Cavia</taxon>
    </lineage>
</organism>
<sequence length="223" mass="25837">MKLFIFTCLLAVALAKHKSEQQSSSEESVSISQEKFKDKNMDTISSEETICASLCKEATKNTPKMAFFSRSSSEEFADIHRENKKDQLYQKWMVPQYNPDFYQRPVVMSPWNQIYTRPYPIVLPTLGKEQISTIEDILKKTTAVESSSSSSTEKSTDVFIKKTKMDEVQKLIQSLLNIIHEYSQKAFWSQTLEDVDQYLKFVMPWNHYNTNADQVDASQERQA</sequence>
<accession>P04655</accession>
<proteinExistence type="evidence at transcript level"/>
<feature type="signal peptide" evidence="1">
    <location>
        <begin position="1"/>
        <end position="15"/>
    </location>
</feature>
<feature type="chain" id="PRO_0000004465" description="Alpha-S2-casein">
    <location>
        <begin position="16"/>
        <end position="223"/>
    </location>
</feature>
<feature type="repeat">
    <location>
        <begin position="76"/>
        <end position="128"/>
    </location>
</feature>
<feature type="repeat">
    <location>
        <begin position="129"/>
        <end position="223"/>
    </location>
</feature>
<feature type="modified residue" description="Phosphoserine" evidence="3">
    <location>
        <position position="23"/>
    </location>
</feature>
<feature type="modified residue" description="Phosphoserine" evidence="3">
    <location>
        <position position="24"/>
    </location>
</feature>
<feature type="modified residue" description="Phosphoserine" evidence="3">
    <location>
        <position position="25"/>
    </location>
</feature>
<feature type="modified residue" description="Phosphoserine" evidence="3">
    <location>
        <position position="28"/>
    </location>
</feature>
<feature type="modified residue" description="Phosphoserine" evidence="3">
    <location>
        <position position="46"/>
    </location>
</feature>
<feature type="modified residue" description="Phosphoserine" evidence="3">
    <location>
        <position position="71"/>
    </location>
</feature>
<feature type="modified residue" description="Phosphoserine" evidence="3">
    <location>
        <position position="72"/>
    </location>
</feature>
<feature type="modified residue" description="Phosphoserine" evidence="3">
    <location>
        <position position="73"/>
    </location>
</feature>
<feature type="modified residue" description="Phosphoserine" evidence="2">
    <location>
        <position position="132"/>
    </location>
</feature>
<feature type="modified residue" description="Phosphoserine" evidence="2">
    <location>
        <position position="147"/>
    </location>
</feature>
<feature type="modified residue" description="Phosphoserine" evidence="3">
    <location>
        <position position="155"/>
    </location>
</feature>
<comment type="function">
    <text>Important role in the capacity of milk to transport calcium phosphate.</text>
</comment>
<comment type="subcellular location">
    <subcellularLocation>
        <location>Secreted</location>
    </subcellularLocation>
</comment>
<comment type="tissue specificity">
    <text>Mammary gland specific. Secreted in milk.</text>
</comment>
<comment type="similarity">
    <text evidence="4">Belongs to the alpha-casein family.</text>
</comment>